<comment type="function">
    <text evidence="1">Ypt/Rab-type GTPases are key regulators of membrane trafficking and intracellular vesicular transport. They act as molecular switches that convert between GTP-bound and GDP-bound states, and regulate virtually all steps of membrane traffic from the formation of the transport vesicle at the donor membrane to its fusion at the target membrane. In the GDP-bound state, Ypt proteins are predominantly cytosolic, solubilized through the interaction with a GDP dissociation inhibitor (GDI). In the GTP-bound state, the proteins are membrane bound and interact with specific effector proteins that select cargo, promote vesicle movement, or verify the correct site of fusion.</text>
</comment>
<comment type="activity regulation">
    <text evidence="1">Alternates between an inactive form bound to GDP and an active form bound to GTP. Activated by guanine nucleotide-exchange factors (GEFs), and inactivated by GTPase-activating proteins (GAPs).</text>
</comment>
<comment type="subcellular location">
    <subcellularLocation>
        <location evidence="3">Cell membrane</location>
        <topology evidence="3">Lipid-anchor</topology>
        <orientation evidence="3">Cytoplasmic side</orientation>
    </subcellularLocation>
</comment>
<comment type="similarity">
    <text evidence="3">Belongs to the small GTPase superfamily. Rab family.</text>
</comment>
<evidence type="ECO:0000250" key="1">
    <source>
        <dbReference type="UniProtKB" id="P32939"/>
    </source>
</evidence>
<evidence type="ECO:0000250" key="2">
    <source>
        <dbReference type="UniProtKB" id="P36586"/>
    </source>
</evidence>
<evidence type="ECO:0000305" key="3"/>
<proteinExistence type="inferred from homology"/>
<organism>
    <name type="scientific">Neurospora crassa (strain ATCC 24698 / 74-OR23-1A / CBS 708.71 / DSM 1257 / FGSC 987)</name>
    <dbReference type="NCBI Taxonomy" id="367110"/>
    <lineage>
        <taxon>Eukaryota</taxon>
        <taxon>Fungi</taxon>
        <taxon>Dikarya</taxon>
        <taxon>Ascomycota</taxon>
        <taxon>Pezizomycotina</taxon>
        <taxon>Sordariomycetes</taxon>
        <taxon>Sordariomycetidae</taxon>
        <taxon>Sordariales</taxon>
        <taxon>Sordariaceae</taxon>
        <taxon>Neurospora</taxon>
    </lineage>
</organism>
<keyword id="KW-1003">Cell membrane</keyword>
<keyword id="KW-0342">GTP-binding</keyword>
<keyword id="KW-0449">Lipoprotein</keyword>
<keyword id="KW-0472">Membrane</keyword>
<keyword id="KW-0488">Methylation</keyword>
<keyword id="KW-0547">Nucleotide-binding</keyword>
<keyword id="KW-0636">Prenylation</keyword>
<keyword id="KW-0653">Protein transport</keyword>
<keyword id="KW-1185">Reference proteome</keyword>
<keyword id="KW-0813">Transport</keyword>
<gene>
    <name type="primary">gtp-14</name>
    <name type="ORF">17E5.300</name>
    <name type="ORF">NCU03711</name>
</gene>
<dbReference type="EMBL" id="AL513467">
    <property type="protein sequence ID" value="CAC28856.1"/>
    <property type="molecule type" value="Genomic_DNA"/>
</dbReference>
<dbReference type="EMBL" id="CM002240">
    <property type="protein sequence ID" value="EAA32251.1"/>
    <property type="molecule type" value="Genomic_DNA"/>
</dbReference>
<dbReference type="RefSeq" id="XP_961487.1">
    <property type="nucleotide sequence ID" value="XM_956394.2"/>
</dbReference>
<dbReference type="SMR" id="Q9C2L8"/>
<dbReference type="FunCoup" id="Q9C2L8">
    <property type="interactions" value="913"/>
</dbReference>
<dbReference type="STRING" id="367110.Q9C2L8"/>
<dbReference type="PaxDb" id="5141-EFNCRP00000003431"/>
<dbReference type="EnsemblFungi" id="EAA32251">
    <property type="protein sequence ID" value="EAA32251"/>
    <property type="gene ID" value="NCU03711"/>
</dbReference>
<dbReference type="GeneID" id="3877651"/>
<dbReference type="KEGG" id="ncr:NCU03711"/>
<dbReference type="VEuPathDB" id="FungiDB:NCU03711"/>
<dbReference type="HOGENOM" id="CLU_041217_10_6_1"/>
<dbReference type="InParanoid" id="Q9C2L8"/>
<dbReference type="OMA" id="TSWKDEF"/>
<dbReference type="OrthoDB" id="9989112at2759"/>
<dbReference type="Proteomes" id="UP000001805">
    <property type="component" value="Chromosome 2, Linkage Group V"/>
</dbReference>
<dbReference type="GO" id="GO:0000329">
    <property type="term" value="C:fungal-type vacuole membrane"/>
    <property type="evidence" value="ECO:0000318"/>
    <property type="project" value="GO_Central"/>
</dbReference>
<dbReference type="GO" id="GO:0005770">
    <property type="term" value="C:late endosome"/>
    <property type="evidence" value="ECO:0000318"/>
    <property type="project" value="GO_Central"/>
</dbReference>
<dbReference type="GO" id="GO:0005886">
    <property type="term" value="C:plasma membrane"/>
    <property type="evidence" value="ECO:0007669"/>
    <property type="project" value="UniProtKB-SubCell"/>
</dbReference>
<dbReference type="GO" id="GO:0005773">
    <property type="term" value="C:vacuole"/>
    <property type="evidence" value="ECO:0000318"/>
    <property type="project" value="GO_Central"/>
</dbReference>
<dbReference type="GO" id="GO:0005525">
    <property type="term" value="F:GTP binding"/>
    <property type="evidence" value="ECO:0007669"/>
    <property type="project" value="UniProtKB-KW"/>
</dbReference>
<dbReference type="GO" id="GO:0003924">
    <property type="term" value="F:GTPase activity"/>
    <property type="evidence" value="ECO:0007669"/>
    <property type="project" value="InterPro"/>
</dbReference>
<dbReference type="GO" id="GO:0015031">
    <property type="term" value="P:protein transport"/>
    <property type="evidence" value="ECO:0007669"/>
    <property type="project" value="UniProtKB-KW"/>
</dbReference>
<dbReference type="GO" id="GO:0032889">
    <property type="term" value="P:regulation of vacuole fusion, non-autophagic"/>
    <property type="evidence" value="ECO:0000318"/>
    <property type="project" value="GO_Central"/>
</dbReference>
<dbReference type="CDD" id="cd01862">
    <property type="entry name" value="Rab7"/>
    <property type="match status" value="1"/>
</dbReference>
<dbReference type="FunFam" id="3.40.50.300:FF:000086">
    <property type="entry name" value="Ras-related small GTPase"/>
    <property type="match status" value="1"/>
</dbReference>
<dbReference type="Gene3D" id="3.40.50.300">
    <property type="entry name" value="P-loop containing nucleotide triphosphate hydrolases"/>
    <property type="match status" value="1"/>
</dbReference>
<dbReference type="InterPro" id="IPR027417">
    <property type="entry name" value="P-loop_NTPase"/>
</dbReference>
<dbReference type="InterPro" id="IPR005225">
    <property type="entry name" value="Small_GTP-bd"/>
</dbReference>
<dbReference type="InterPro" id="IPR001806">
    <property type="entry name" value="Small_GTPase"/>
</dbReference>
<dbReference type="NCBIfam" id="TIGR00231">
    <property type="entry name" value="small_GTP"/>
    <property type="match status" value="1"/>
</dbReference>
<dbReference type="PANTHER" id="PTHR47981">
    <property type="entry name" value="RAB FAMILY"/>
    <property type="match status" value="1"/>
</dbReference>
<dbReference type="PANTHER" id="PTHR47981:SF20">
    <property type="entry name" value="RAS-RELATED PROTEIN RAB-7A"/>
    <property type="match status" value="1"/>
</dbReference>
<dbReference type="Pfam" id="PF00071">
    <property type="entry name" value="Ras"/>
    <property type="match status" value="1"/>
</dbReference>
<dbReference type="PRINTS" id="PR00449">
    <property type="entry name" value="RASTRNSFRMNG"/>
</dbReference>
<dbReference type="SMART" id="SM00175">
    <property type="entry name" value="RAB"/>
    <property type="match status" value="1"/>
</dbReference>
<dbReference type="SMART" id="SM00176">
    <property type="entry name" value="RAN"/>
    <property type="match status" value="1"/>
</dbReference>
<dbReference type="SMART" id="SM00173">
    <property type="entry name" value="RAS"/>
    <property type="match status" value="1"/>
</dbReference>
<dbReference type="SMART" id="SM00174">
    <property type="entry name" value="RHO"/>
    <property type="match status" value="1"/>
</dbReference>
<dbReference type="SUPFAM" id="SSF52540">
    <property type="entry name" value="P-loop containing nucleoside triphosphate hydrolases"/>
    <property type="match status" value="1"/>
</dbReference>
<dbReference type="PROSITE" id="PS51419">
    <property type="entry name" value="RAB"/>
    <property type="match status" value="1"/>
</dbReference>
<reference key="1">
    <citation type="journal article" date="2003" name="Nucleic Acids Res.">
        <title>What's in the genome of a filamentous fungus? Analysis of the Neurospora genome sequence.</title>
        <authorList>
            <person name="Mannhaupt G."/>
            <person name="Montrone C."/>
            <person name="Haase D."/>
            <person name="Mewes H.-W."/>
            <person name="Aign V."/>
            <person name="Hoheisel J.D."/>
            <person name="Fartmann B."/>
            <person name="Nyakatura G."/>
            <person name="Kempken F."/>
            <person name="Maier J."/>
            <person name="Schulte U."/>
        </authorList>
    </citation>
    <scope>NUCLEOTIDE SEQUENCE [LARGE SCALE GENOMIC DNA]</scope>
    <source>
        <strain>ATCC 24698 / 74-OR23-1A / CBS 708.71 / DSM 1257 / FGSC 987</strain>
    </source>
</reference>
<reference key="2">
    <citation type="journal article" date="2003" name="Nature">
        <title>The genome sequence of the filamentous fungus Neurospora crassa.</title>
        <authorList>
            <person name="Galagan J.E."/>
            <person name="Calvo S.E."/>
            <person name="Borkovich K.A."/>
            <person name="Selker E.U."/>
            <person name="Read N.D."/>
            <person name="Jaffe D.B."/>
            <person name="FitzHugh W."/>
            <person name="Ma L.-J."/>
            <person name="Smirnov S."/>
            <person name="Purcell S."/>
            <person name="Rehman B."/>
            <person name="Elkins T."/>
            <person name="Engels R."/>
            <person name="Wang S."/>
            <person name="Nielsen C.B."/>
            <person name="Butler J."/>
            <person name="Endrizzi M."/>
            <person name="Qui D."/>
            <person name="Ianakiev P."/>
            <person name="Bell-Pedersen D."/>
            <person name="Nelson M.A."/>
            <person name="Werner-Washburne M."/>
            <person name="Selitrennikoff C.P."/>
            <person name="Kinsey J.A."/>
            <person name="Braun E.L."/>
            <person name="Zelter A."/>
            <person name="Schulte U."/>
            <person name="Kothe G.O."/>
            <person name="Jedd G."/>
            <person name="Mewes H.-W."/>
            <person name="Staben C."/>
            <person name="Marcotte E."/>
            <person name="Greenberg D."/>
            <person name="Roy A."/>
            <person name="Foley K."/>
            <person name="Naylor J."/>
            <person name="Stange-Thomann N."/>
            <person name="Barrett R."/>
            <person name="Gnerre S."/>
            <person name="Kamal M."/>
            <person name="Kamvysselis M."/>
            <person name="Mauceli E.W."/>
            <person name="Bielke C."/>
            <person name="Rudd S."/>
            <person name="Frishman D."/>
            <person name="Krystofova S."/>
            <person name="Rasmussen C."/>
            <person name="Metzenberg R.L."/>
            <person name="Perkins D.D."/>
            <person name="Kroken S."/>
            <person name="Cogoni C."/>
            <person name="Macino G."/>
            <person name="Catcheside D.E.A."/>
            <person name="Li W."/>
            <person name="Pratt R.J."/>
            <person name="Osmani S.A."/>
            <person name="DeSouza C.P.C."/>
            <person name="Glass N.L."/>
            <person name="Orbach M.J."/>
            <person name="Berglund J.A."/>
            <person name="Voelker R."/>
            <person name="Yarden O."/>
            <person name="Plamann M."/>
            <person name="Seiler S."/>
            <person name="Dunlap J.C."/>
            <person name="Radford A."/>
            <person name="Aramayo R."/>
            <person name="Natvig D.O."/>
            <person name="Alex L.A."/>
            <person name="Mannhaupt G."/>
            <person name="Ebbole D.J."/>
            <person name="Freitag M."/>
            <person name="Paulsen I."/>
            <person name="Sachs M.S."/>
            <person name="Lander E.S."/>
            <person name="Nusbaum C."/>
            <person name="Birren B.W."/>
        </authorList>
    </citation>
    <scope>NUCLEOTIDE SEQUENCE [LARGE SCALE GENOMIC DNA]</scope>
    <source>
        <strain>ATCC 24698 / 74-OR23-1A / CBS 708.71 / DSM 1257 / FGSC 987</strain>
    </source>
</reference>
<sequence>MSSRKKVLLKVIILGDSGVGKTSLMNQYVNKKFSASYKATIGADFLTREVLVDDRQVTMQLWDTAGQERFQSLGVAFYRGADCCVLVYDVNNSKSFDALDSWRDEFLIQASPRDPDNFPFVVLGNKIDMEESKRVISTKRAMTFCQSKGNIPYFETSAKEAINVEQAFEVIARNALMQEESEEFSGDFQDPINIHIENDRDGCAC</sequence>
<accession>Q9C2L8</accession>
<accession>Q7S7Y4</accession>
<feature type="chain" id="PRO_0000121315" description="Ypt/Rab-type GTPase Rab7">
    <location>
        <begin position="1"/>
        <end position="205"/>
    </location>
</feature>
<feature type="short sequence motif" description="Effector region" evidence="1">
    <location>
        <begin position="37"/>
        <end position="45"/>
    </location>
</feature>
<feature type="binding site" evidence="1">
    <location>
        <begin position="17"/>
        <end position="23"/>
    </location>
    <ligand>
        <name>GTP</name>
        <dbReference type="ChEBI" id="CHEBI:37565"/>
    </ligand>
</feature>
<feature type="binding site" evidence="1">
    <location>
        <begin position="33"/>
        <end position="40"/>
    </location>
    <ligand>
        <name>GTP</name>
        <dbReference type="ChEBI" id="CHEBI:37565"/>
    </ligand>
</feature>
<feature type="binding site" evidence="1">
    <location>
        <position position="66"/>
    </location>
    <ligand>
        <name>GTP</name>
        <dbReference type="ChEBI" id="CHEBI:37565"/>
    </ligand>
</feature>
<feature type="binding site" evidence="1">
    <location>
        <begin position="125"/>
        <end position="128"/>
    </location>
    <ligand>
        <name>GTP</name>
        <dbReference type="ChEBI" id="CHEBI:37565"/>
    </ligand>
</feature>
<feature type="binding site" evidence="1">
    <location>
        <begin position="157"/>
        <end position="159"/>
    </location>
    <ligand>
        <name>GTP</name>
        <dbReference type="ChEBI" id="CHEBI:37565"/>
    </ligand>
</feature>
<feature type="modified residue" description="Cysteine methyl ester" evidence="2">
    <location>
        <position position="205"/>
    </location>
</feature>
<feature type="lipid moiety-binding region" description="S-geranylgeranyl cysteine" evidence="2">
    <location>
        <position position="203"/>
    </location>
</feature>
<feature type="lipid moiety-binding region" description="S-geranylgeranyl cysteine" evidence="2">
    <location>
        <position position="205"/>
    </location>
</feature>
<protein>
    <recommendedName>
        <fullName>Ypt/Rab-type GTPase Rab7</fullName>
    </recommendedName>
    <alternativeName>
        <fullName>Guanine triphosphate binding protein 14</fullName>
    </alternativeName>
</protein>
<name>RAB7_NEUCR</name>